<proteinExistence type="inferred from homology"/>
<keyword id="KW-0687">Ribonucleoprotein</keyword>
<keyword id="KW-0689">Ribosomal protein</keyword>
<keyword id="KW-0694">RNA-binding</keyword>
<keyword id="KW-0699">rRNA-binding</keyword>
<gene>
    <name evidence="1" type="primary">rplW</name>
    <name type="ordered locus">CbuK_0435</name>
</gene>
<name>RL23_COXB1</name>
<comment type="function">
    <text evidence="1">One of the early assembly proteins it binds 23S rRNA. One of the proteins that surrounds the polypeptide exit tunnel on the outside of the ribosome. Forms the main docking site for trigger factor binding to the ribosome.</text>
</comment>
<comment type="subunit">
    <text evidence="1">Part of the 50S ribosomal subunit. Contacts protein L29, and trigger factor when it is bound to the ribosome.</text>
</comment>
<comment type="similarity">
    <text evidence="1">Belongs to the universal ribosomal protein uL23 family.</text>
</comment>
<organism>
    <name type="scientific">Coxiella burnetii (strain CbuK_Q154)</name>
    <name type="common">Coxiella burnetii (strain Q154)</name>
    <dbReference type="NCBI Taxonomy" id="434924"/>
    <lineage>
        <taxon>Bacteria</taxon>
        <taxon>Pseudomonadati</taxon>
        <taxon>Pseudomonadota</taxon>
        <taxon>Gammaproteobacteria</taxon>
        <taxon>Legionellales</taxon>
        <taxon>Coxiellaceae</taxon>
        <taxon>Coxiella</taxon>
    </lineage>
</organism>
<evidence type="ECO:0000255" key="1">
    <source>
        <dbReference type="HAMAP-Rule" id="MF_01369"/>
    </source>
</evidence>
<evidence type="ECO:0000305" key="2"/>
<protein>
    <recommendedName>
        <fullName evidence="1">Large ribosomal subunit protein uL23</fullName>
    </recommendedName>
    <alternativeName>
        <fullName evidence="2">50S ribosomal protein L23</fullName>
    </alternativeName>
</protein>
<feature type="chain" id="PRO_1000144558" description="Large ribosomal subunit protein uL23">
    <location>
        <begin position="1"/>
        <end position="95"/>
    </location>
</feature>
<accession>B6J5D4</accession>
<reference key="1">
    <citation type="journal article" date="2009" name="Infect. Immun.">
        <title>Comparative genomics reveal extensive transposon-mediated genomic plasticity and diversity among potential effector proteins within the genus Coxiella.</title>
        <authorList>
            <person name="Beare P.A."/>
            <person name="Unsworth N."/>
            <person name="Andoh M."/>
            <person name="Voth D.E."/>
            <person name="Omsland A."/>
            <person name="Gilk S.D."/>
            <person name="Williams K.P."/>
            <person name="Sobral B.W."/>
            <person name="Kupko J.J. III"/>
            <person name="Porcella S.F."/>
            <person name="Samuel J.E."/>
            <person name="Heinzen R.A."/>
        </authorList>
    </citation>
    <scope>NUCLEOTIDE SEQUENCE [LARGE SCALE GENOMIC DNA]</scope>
    <source>
        <strain>CbuK_Q154</strain>
    </source>
</reference>
<sequence length="95" mass="10809">MNEERLFKILLAPHISEKGALTTGQYVFEVMPDATKPEIKRAVEKQFNVTVKSVRTCNVKGKTTRFRQVRGRRKNWKKAYVMLAPGSEIDIAAGE</sequence>
<dbReference type="EMBL" id="CP001020">
    <property type="protein sequence ID" value="ACJ19718.1"/>
    <property type="molecule type" value="Genomic_DNA"/>
</dbReference>
<dbReference type="RefSeq" id="WP_005771542.1">
    <property type="nucleotide sequence ID" value="NC_011528.1"/>
</dbReference>
<dbReference type="SMR" id="B6J5D4"/>
<dbReference type="KEGG" id="cbc:CbuK_0435"/>
<dbReference type="HOGENOM" id="CLU_037562_3_1_6"/>
<dbReference type="GO" id="GO:1990904">
    <property type="term" value="C:ribonucleoprotein complex"/>
    <property type="evidence" value="ECO:0007669"/>
    <property type="project" value="UniProtKB-KW"/>
</dbReference>
<dbReference type="GO" id="GO:0005840">
    <property type="term" value="C:ribosome"/>
    <property type="evidence" value="ECO:0007669"/>
    <property type="project" value="UniProtKB-KW"/>
</dbReference>
<dbReference type="GO" id="GO:0019843">
    <property type="term" value="F:rRNA binding"/>
    <property type="evidence" value="ECO:0007669"/>
    <property type="project" value="UniProtKB-UniRule"/>
</dbReference>
<dbReference type="GO" id="GO:0003735">
    <property type="term" value="F:structural constituent of ribosome"/>
    <property type="evidence" value="ECO:0007669"/>
    <property type="project" value="InterPro"/>
</dbReference>
<dbReference type="GO" id="GO:0006412">
    <property type="term" value="P:translation"/>
    <property type="evidence" value="ECO:0007669"/>
    <property type="project" value="UniProtKB-UniRule"/>
</dbReference>
<dbReference type="FunFam" id="3.30.70.330:FF:000001">
    <property type="entry name" value="50S ribosomal protein L23"/>
    <property type="match status" value="1"/>
</dbReference>
<dbReference type="Gene3D" id="3.30.70.330">
    <property type="match status" value="1"/>
</dbReference>
<dbReference type="HAMAP" id="MF_01369_B">
    <property type="entry name" value="Ribosomal_uL23_B"/>
    <property type="match status" value="1"/>
</dbReference>
<dbReference type="InterPro" id="IPR012677">
    <property type="entry name" value="Nucleotide-bd_a/b_plait_sf"/>
</dbReference>
<dbReference type="InterPro" id="IPR013025">
    <property type="entry name" value="Ribosomal_uL23-like"/>
</dbReference>
<dbReference type="InterPro" id="IPR012678">
    <property type="entry name" value="Ribosomal_uL23/eL15/eS24_sf"/>
</dbReference>
<dbReference type="NCBIfam" id="NF004359">
    <property type="entry name" value="PRK05738.1-3"/>
    <property type="match status" value="1"/>
</dbReference>
<dbReference type="NCBIfam" id="NF004363">
    <property type="entry name" value="PRK05738.2-4"/>
    <property type="match status" value="1"/>
</dbReference>
<dbReference type="PANTHER" id="PTHR11620">
    <property type="entry name" value="60S RIBOSOMAL PROTEIN L23A"/>
    <property type="match status" value="1"/>
</dbReference>
<dbReference type="Pfam" id="PF00276">
    <property type="entry name" value="Ribosomal_L23"/>
    <property type="match status" value="1"/>
</dbReference>
<dbReference type="SUPFAM" id="SSF54189">
    <property type="entry name" value="Ribosomal proteins S24e, L23 and L15e"/>
    <property type="match status" value="1"/>
</dbReference>